<feature type="chain" id="PRO_1000146595" description="Small ribosomal subunit protein eS24">
    <location>
        <begin position="1"/>
        <end position="102"/>
    </location>
</feature>
<sequence length="102" mass="11574">MDVDIISEEENPMLHRTDIRFETTHEEATPSRLSVRDSLAAKLDKASEEVVVHELDTKFGMRKTIGYAKVYDTAEDALDVEQEYMLERNKIGGEVEADAEEA</sequence>
<proteinExistence type="inferred from homology"/>
<accession>B9LSM1</accession>
<evidence type="ECO:0000255" key="1">
    <source>
        <dbReference type="HAMAP-Rule" id="MF_00545"/>
    </source>
</evidence>
<evidence type="ECO:0000305" key="2"/>
<comment type="similarity">
    <text evidence="1">Belongs to the eukaryotic ribosomal protein eS24 family.</text>
</comment>
<dbReference type="EMBL" id="CP001365">
    <property type="protein sequence ID" value="ACM57968.1"/>
    <property type="molecule type" value="Genomic_DNA"/>
</dbReference>
<dbReference type="RefSeq" id="WP_015911088.1">
    <property type="nucleotide sequence ID" value="NC_012029.1"/>
</dbReference>
<dbReference type="SMR" id="B9LSM1"/>
<dbReference type="GeneID" id="7400511"/>
<dbReference type="KEGG" id="hla:Hlac_2393"/>
<dbReference type="eggNOG" id="arCOG04182">
    <property type="taxonomic scope" value="Archaea"/>
</dbReference>
<dbReference type="HOGENOM" id="CLU_107248_3_1_2"/>
<dbReference type="Proteomes" id="UP000000740">
    <property type="component" value="Chromosome 1"/>
</dbReference>
<dbReference type="GO" id="GO:1990904">
    <property type="term" value="C:ribonucleoprotein complex"/>
    <property type="evidence" value="ECO:0007669"/>
    <property type="project" value="UniProtKB-KW"/>
</dbReference>
<dbReference type="GO" id="GO:0005840">
    <property type="term" value="C:ribosome"/>
    <property type="evidence" value="ECO:0007669"/>
    <property type="project" value="UniProtKB-KW"/>
</dbReference>
<dbReference type="GO" id="GO:0003735">
    <property type="term" value="F:structural constituent of ribosome"/>
    <property type="evidence" value="ECO:0007669"/>
    <property type="project" value="InterPro"/>
</dbReference>
<dbReference type="GO" id="GO:0006412">
    <property type="term" value="P:translation"/>
    <property type="evidence" value="ECO:0007669"/>
    <property type="project" value="UniProtKB-UniRule"/>
</dbReference>
<dbReference type="Gene3D" id="3.30.70.330">
    <property type="match status" value="1"/>
</dbReference>
<dbReference type="HAMAP" id="MF_00545">
    <property type="entry name" value="Ribosomal_eS24"/>
    <property type="match status" value="1"/>
</dbReference>
<dbReference type="InterPro" id="IPR012677">
    <property type="entry name" value="Nucleotide-bd_a/b_plait_sf"/>
</dbReference>
<dbReference type="InterPro" id="IPR001976">
    <property type="entry name" value="Ribosomal_eS24"/>
</dbReference>
<dbReference type="InterPro" id="IPR018098">
    <property type="entry name" value="Ribosomal_eS24_CS"/>
</dbReference>
<dbReference type="InterPro" id="IPR012678">
    <property type="entry name" value="Ribosomal_uL23/eL15/eS24_sf"/>
</dbReference>
<dbReference type="PANTHER" id="PTHR10496">
    <property type="entry name" value="40S RIBOSOMAL PROTEIN S24"/>
    <property type="match status" value="1"/>
</dbReference>
<dbReference type="Pfam" id="PF01282">
    <property type="entry name" value="Ribosomal_S24e"/>
    <property type="match status" value="1"/>
</dbReference>
<dbReference type="SUPFAM" id="SSF54189">
    <property type="entry name" value="Ribosomal proteins S24e, L23 and L15e"/>
    <property type="match status" value="1"/>
</dbReference>
<dbReference type="PROSITE" id="PS00529">
    <property type="entry name" value="RIBOSOMAL_S24E"/>
    <property type="match status" value="1"/>
</dbReference>
<keyword id="KW-1185">Reference proteome</keyword>
<keyword id="KW-0687">Ribonucleoprotein</keyword>
<keyword id="KW-0689">Ribosomal protein</keyword>
<organism>
    <name type="scientific">Halorubrum lacusprofundi (strain ATCC 49239 / DSM 5036 / JCM 8891 / ACAM 34)</name>
    <dbReference type="NCBI Taxonomy" id="416348"/>
    <lineage>
        <taxon>Archaea</taxon>
        <taxon>Methanobacteriati</taxon>
        <taxon>Methanobacteriota</taxon>
        <taxon>Stenosarchaea group</taxon>
        <taxon>Halobacteria</taxon>
        <taxon>Halobacteriales</taxon>
        <taxon>Haloferacaceae</taxon>
        <taxon>Halorubrum</taxon>
    </lineage>
</organism>
<reference key="1">
    <citation type="journal article" date="2016" name="Stand. Genomic Sci.">
        <title>Complete genome sequence of the Antarctic Halorubrum lacusprofundi type strain ACAM 34.</title>
        <authorList>
            <person name="Anderson I.J."/>
            <person name="DasSarma P."/>
            <person name="Lucas S."/>
            <person name="Copeland A."/>
            <person name="Lapidus A."/>
            <person name="Del Rio T.G."/>
            <person name="Tice H."/>
            <person name="Dalin E."/>
            <person name="Bruce D.C."/>
            <person name="Goodwin L."/>
            <person name="Pitluck S."/>
            <person name="Sims D."/>
            <person name="Brettin T.S."/>
            <person name="Detter J.C."/>
            <person name="Han C.S."/>
            <person name="Larimer F."/>
            <person name="Hauser L."/>
            <person name="Land M."/>
            <person name="Ivanova N."/>
            <person name="Richardson P."/>
            <person name="Cavicchioli R."/>
            <person name="DasSarma S."/>
            <person name="Woese C.R."/>
            <person name="Kyrpides N.C."/>
        </authorList>
    </citation>
    <scope>NUCLEOTIDE SEQUENCE [LARGE SCALE GENOMIC DNA]</scope>
    <source>
        <strain>ATCC 49239 / DSM 5036 / JCM 8891 / ACAM 34</strain>
    </source>
</reference>
<protein>
    <recommendedName>
        <fullName evidence="1">Small ribosomal subunit protein eS24</fullName>
    </recommendedName>
    <alternativeName>
        <fullName evidence="2">30S ribosomal protein S24e</fullName>
    </alternativeName>
</protein>
<name>RS24_HALLT</name>
<gene>
    <name evidence="1" type="primary">rps24e</name>
    <name type="ordered locus">Hlac_2393</name>
</gene>